<proteinExistence type="evidence at protein level"/>
<comment type="miscellaneous">
    <text>This sequence belongs to the VH3660 subfamily.</text>
</comment>
<reference key="1">
    <citation type="journal article" date="1989" name="J. Exp. Med.">
        <title>Early onset of somatic mutation in immunoglobulin VH genes during the primary immune response.</title>
        <authorList>
            <person name="Levy N.S."/>
            <person name="Malipiero U.V."/>
            <person name="Lebecque S.G."/>
            <person name="Gearhart P.J."/>
        </authorList>
    </citation>
    <scope>NUCLEOTIDE SEQUENCE</scope>
    <source>
        <strain>BALB/cJ</strain>
    </source>
</reference>
<name>HVM61_MOUSE</name>
<protein>
    <recommendedName>
        <fullName>Ig heavy chain V region 1B43</fullName>
    </recommendedName>
</protein>
<keyword id="KW-0002">3D-structure</keyword>
<keyword id="KW-1064">Adaptive immunity</keyword>
<keyword id="KW-1015">Disulfide bond</keyword>
<keyword id="KW-0391">Immunity</keyword>
<keyword id="KW-1280">Immunoglobulin</keyword>
<keyword id="KW-1185">Reference proteome</keyword>
<keyword id="KW-0732">Signal</keyword>
<organism>
    <name type="scientific">Mus musculus</name>
    <name type="common">Mouse</name>
    <dbReference type="NCBI Taxonomy" id="10090"/>
    <lineage>
        <taxon>Eukaryota</taxon>
        <taxon>Metazoa</taxon>
        <taxon>Chordata</taxon>
        <taxon>Craniata</taxon>
        <taxon>Vertebrata</taxon>
        <taxon>Euteleostomi</taxon>
        <taxon>Mammalia</taxon>
        <taxon>Eutheria</taxon>
        <taxon>Euarchontoglires</taxon>
        <taxon>Glires</taxon>
        <taxon>Rodentia</taxon>
        <taxon>Myomorpha</taxon>
        <taxon>Muroidea</taxon>
        <taxon>Muridae</taxon>
        <taxon>Murinae</taxon>
        <taxon>Mus</taxon>
        <taxon>Mus</taxon>
    </lineage>
</organism>
<evidence type="ECO:0000255" key="1">
    <source>
        <dbReference type="PROSITE-ProRule" id="PRU00114"/>
    </source>
</evidence>
<evidence type="ECO:0007829" key="2">
    <source>
        <dbReference type="PDB" id="1KCV"/>
    </source>
</evidence>
<dbReference type="PIR" id="JT0508">
    <property type="entry name" value="HVMS1B"/>
</dbReference>
<dbReference type="PDB" id="1KCS">
    <property type="method" value="X-ray"/>
    <property type="resolution" value="2.50 A"/>
    <property type="chains" value="H=22-116"/>
</dbReference>
<dbReference type="PDB" id="1KCV">
    <property type="method" value="X-ray"/>
    <property type="resolution" value="1.80 A"/>
    <property type="chains" value="H=22-116"/>
</dbReference>
<dbReference type="PDB" id="2F58">
    <property type="method" value="X-ray"/>
    <property type="resolution" value="2.80 A"/>
    <property type="chains" value="H=19-116"/>
</dbReference>
<dbReference type="PDB" id="3F58">
    <property type="method" value="X-ray"/>
    <property type="resolution" value="2.80 A"/>
    <property type="chains" value="H=19-116"/>
</dbReference>
<dbReference type="PDBsum" id="1KCS"/>
<dbReference type="PDBsum" id="1KCV"/>
<dbReference type="PDBsum" id="2F58"/>
<dbReference type="PDBsum" id="3F58"/>
<dbReference type="SMR" id="P18532"/>
<dbReference type="FunCoup" id="P18532">
    <property type="interactions" value="615"/>
</dbReference>
<dbReference type="InParanoid" id="P18532"/>
<dbReference type="EvolutionaryTrace" id="P18532"/>
<dbReference type="Proteomes" id="UP000000589">
    <property type="component" value="Unplaced"/>
</dbReference>
<dbReference type="RNAct" id="P18532">
    <property type="molecule type" value="protein"/>
</dbReference>
<dbReference type="GO" id="GO:0005576">
    <property type="term" value="C:extracellular region"/>
    <property type="evidence" value="ECO:0007669"/>
    <property type="project" value="UniProtKB-ARBA"/>
</dbReference>
<dbReference type="GO" id="GO:0019814">
    <property type="term" value="C:immunoglobulin complex"/>
    <property type="evidence" value="ECO:0007669"/>
    <property type="project" value="UniProtKB-KW"/>
</dbReference>
<dbReference type="GO" id="GO:0003823">
    <property type="term" value="F:antigen binding"/>
    <property type="evidence" value="ECO:0000318"/>
    <property type="project" value="GO_Central"/>
</dbReference>
<dbReference type="GO" id="GO:0016064">
    <property type="term" value="P:immunoglobulin mediated immune response"/>
    <property type="evidence" value="ECO:0000318"/>
    <property type="project" value="GO_Central"/>
</dbReference>
<dbReference type="FunFam" id="2.60.40.10:FF:002253">
    <property type="entry name" value="Ig heavy chain V region 36-60"/>
    <property type="match status" value="1"/>
</dbReference>
<dbReference type="Gene3D" id="2.60.40.10">
    <property type="entry name" value="Immunoglobulins"/>
    <property type="match status" value="1"/>
</dbReference>
<dbReference type="InterPro" id="IPR007110">
    <property type="entry name" value="Ig-like_dom"/>
</dbReference>
<dbReference type="InterPro" id="IPR036179">
    <property type="entry name" value="Ig-like_dom_sf"/>
</dbReference>
<dbReference type="InterPro" id="IPR013783">
    <property type="entry name" value="Ig-like_fold"/>
</dbReference>
<dbReference type="InterPro" id="IPR013106">
    <property type="entry name" value="Ig_V-set"/>
</dbReference>
<dbReference type="InterPro" id="IPR050199">
    <property type="entry name" value="IgHV"/>
</dbReference>
<dbReference type="PANTHER" id="PTHR23266">
    <property type="entry name" value="IMMUNOGLOBULIN HEAVY CHAIN"/>
    <property type="match status" value="1"/>
</dbReference>
<dbReference type="Pfam" id="PF07686">
    <property type="entry name" value="V-set"/>
    <property type="match status" value="1"/>
</dbReference>
<dbReference type="SMART" id="SM00406">
    <property type="entry name" value="IGv"/>
    <property type="match status" value="1"/>
</dbReference>
<dbReference type="SUPFAM" id="SSF48726">
    <property type="entry name" value="Immunoglobulin"/>
    <property type="match status" value="1"/>
</dbReference>
<dbReference type="PROSITE" id="PS50835">
    <property type="entry name" value="IG_LIKE"/>
    <property type="match status" value="1"/>
</dbReference>
<sequence>MRVLILLCLFTAFPGILSDVQLQESGPDLVKPSQSLSLTCTVTGYSITSGYSWHWIRQFPGNKLEWMGYIHYSGNTSYNPSLKSRISITRDTSKNQFFLQLNSVTTEDTATYYCAR</sequence>
<feature type="signal peptide">
    <location>
        <begin position="1"/>
        <end position="18"/>
    </location>
</feature>
<feature type="chain" id="PRO_0000015242" description="Ig heavy chain V region 1B43">
    <location>
        <begin position="19"/>
        <end position="116"/>
    </location>
</feature>
<feature type="region of interest" description="Framework-1">
    <location>
        <begin position="19"/>
        <end position="48"/>
    </location>
</feature>
<feature type="region of interest" description="Complementarity-determining-1">
    <location>
        <begin position="49"/>
        <end position="53"/>
    </location>
</feature>
<feature type="region of interest" description="Framework-2">
    <location>
        <begin position="54"/>
        <end position="67"/>
    </location>
</feature>
<feature type="region of interest" description="Complementarity-determining-2">
    <location>
        <begin position="68"/>
        <end position="84"/>
    </location>
</feature>
<feature type="region of interest" description="Framework-3">
    <location>
        <begin position="85"/>
        <end position="116"/>
    </location>
</feature>
<feature type="disulfide bond" evidence="1">
    <location>
        <begin position="40"/>
        <end position="114"/>
    </location>
</feature>
<feature type="non-terminal residue">
    <location>
        <position position="116"/>
    </location>
</feature>
<feature type="strand" evidence="2">
    <location>
        <begin position="21"/>
        <end position="25"/>
    </location>
</feature>
<feature type="strand" evidence="2">
    <location>
        <begin position="28"/>
        <end position="30"/>
    </location>
</feature>
<feature type="strand" evidence="2">
    <location>
        <begin position="36"/>
        <end position="45"/>
    </location>
</feature>
<feature type="turn" evidence="2">
    <location>
        <begin position="47"/>
        <end position="49"/>
    </location>
</feature>
<feature type="strand" evidence="2">
    <location>
        <begin position="50"/>
        <end position="58"/>
    </location>
</feature>
<feature type="strand" evidence="2">
    <location>
        <begin position="64"/>
        <end position="71"/>
    </location>
</feature>
<feature type="strand" evidence="2">
    <location>
        <begin position="76"/>
        <end position="78"/>
    </location>
</feature>
<feature type="turn" evidence="2">
    <location>
        <begin position="80"/>
        <end position="85"/>
    </location>
</feature>
<feature type="strand" evidence="2">
    <location>
        <begin position="86"/>
        <end position="91"/>
    </location>
</feature>
<feature type="turn" evidence="2">
    <location>
        <begin position="92"/>
        <end position="95"/>
    </location>
</feature>
<feature type="strand" evidence="2">
    <location>
        <begin position="96"/>
        <end position="101"/>
    </location>
</feature>
<feature type="helix" evidence="2">
    <location>
        <begin position="106"/>
        <end position="108"/>
    </location>
</feature>
<feature type="strand" evidence="2">
    <location>
        <begin position="110"/>
        <end position="116"/>
    </location>
</feature>
<accession>P18532</accession>